<accession>B4QWH9</accession>
<organism>
    <name type="scientific">Drosophila simulans</name>
    <name type="common">Fruit fly</name>
    <dbReference type="NCBI Taxonomy" id="7240"/>
    <lineage>
        <taxon>Eukaryota</taxon>
        <taxon>Metazoa</taxon>
        <taxon>Ecdysozoa</taxon>
        <taxon>Arthropoda</taxon>
        <taxon>Hexapoda</taxon>
        <taxon>Insecta</taxon>
        <taxon>Pterygota</taxon>
        <taxon>Neoptera</taxon>
        <taxon>Endopterygota</taxon>
        <taxon>Diptera</taxon>
        <taxon>Brachycera</taxon>
        <taxon>Muscomorpha</taxon>
        <taxon>Ephydroidea</taxon>
        <taxon>Drosophilidae</taxon>
        <taxon>Drosophila</taxon>
        <taxon>Sophophora</taxon>
    </lineage>
</organism>
<name>TMEDE_DROSI</name>
<sequence length="216" mass="25136">MRDQFISLALILCVLHSACGLYFHISETERKCFIEEVPDETTVIVNYKVELYDPRSNGFMPSSPGIGMHVEVRDSDDKIVLSRVYSSQGRISFTSHTPGEHVICMFSNSTAWFSGAQLRVHLDIQVGEHAIDYANVAQKEKLTELQLRIRQLLDQVEQITKEQNYQRYREERFRHTSESTNSRVLWWSLAQTVVLVCMGFWQMRHLKSFFEAKKLV</sequence>
<dbReference type="EMBL" id="CM000364">
    <property type="protein sequence ID" value="EDX13583.1"/>
    <property type="molecule type" value="Genomic_DNA"/>
</dbReference>
<dbReference type="SMR" id="B4QWH9"/>
<dbReference type="STRING" id="7240.B4QWH9"/>
<dbReference type="EnsemblMetazoa" id="FBtr0220682">
    <property type="protein sequence ID" value="FBpp0219174"/>
    <property type="gene ID" value="FBgn0192236"/>
</dbReference>
<dbReference type="EnsemblMetazoa" id="XM_002104044.4">
    <property type="protein sequence ID" value="XP_002104080.1"/>
    <property type="gene ID" value="LOC6728745"/>
</dbReference>
<dbReference type="GeneID" id="6728745"/>
<dbReference type="KEGG" id="dsi:Dsimw501_GD20772"/>
<dbReference type="CTD" id="41177"/>
<dbReference type="HOGENOM" id="CLU_066963_2_2_1"/>
<dbReference type="OMA" id="GATCAWQ"/>
<dbReference type="OrthoDB" id="3427at2759"/>
<dbReference type="PhylomeDB" id="B4QWH9"/>
<dbReference type="Proteomes" id="UP000000304">
    <property type="component" value="Chromosome 3R"/>
</dbReference>
<dbReference type="Bgee" id="FBgn0192236">
    <property type="expression patterns" value="Expressed in embryo and 3 other cell types or tissues"/>
</dbReference>
<dbReference type="GO" id="GO:0005789">
    <property type="term" value="C:endoplasmic reticulum membrane"/>
    <property type="evidence" value="ECO:0007669"/>
    <property type="project" value="UniProtKB-SubCell"/>
</dbReference>
<dbReference type="GO" id="GO:0009953">
    <property type="term" value="P:dorsal/ventral pattern formation"/>
    <property type="evidence" value="ECO:0000250"/>
    <property type="project" value="UniProtKB"/>
</dbReference>
<dbReference type="InterPro" id="IPR015720">
    <property type="entry name" value="Emp24-like"/>
</dbReference>
<dbReference type="InterPro" id="IPR009038">
    <property type="entry name" value="GOLD_dom"/>
</dbReference>
<dbReference type="PANTHER" id="PTHR22811">
    <property type="entry name" value="TRANSMEMBRANE EMP24 DOMAIN-CONTAINING PROTEIN"/>
    <property type="match status" value="1"/>
</dbReference>
<dbReference type="Pfam" id="PF01105">
    <property type="entry name" value="EMP24_GP25L"/>
    <property type="match status" value="1"/>
</dbReference>
<dbReference type="SMART" id="SM01190">
    <property type="entry name" value="EMP24_GP25L"/>
    <property type="match status" value="1"/>
</dbReference>
<dbReference type="PROSITE" id="PS50866">
    <property type="entry name" value="GOLD"/>
    <property type="match status" value="1"/>
</dbReference>
<reference evidence="5" key="1">
    <citation type="journal article" date="2007" name="Nature">
        <title>Evolution of genes and genomes on the Drosophila phylogeny.</title>
        <authorList>
            <consortium name="Drosophila 12 genomes consortium"/>
        </authorList>
    </citation>
    <scope>NUCLEOTIDE SEQUENCE [LARGE SCALE GENOMIC DNA]</scope>
</reference>
<protein>
    <recommendedName>
        <fullName evidence="2">Transmembrane emp24 domain-containing protein eca</fullName>
    </recommendedName>
</protein>
<proteinExistence type="inferred from homology"/>
<gene>
    <name evidence="2" type="primary">eca</name>
    <name type="ORF">GD20772</name>
</gene>
<comment type="function">
    <text evidence="1">Eca and bai are essential, though not redundant, for dorsoventral patterning of the embryo. Specifically required during early embryogenesis for the activity of maternal tkv, while the zygotic tkv is not affected. Involved in Golgi organization (By similarity).</text>
</comment>
<comment type="subcellular location">
    <subcellularLocation>
        <location evidence="3">Endoplasmic reticulum membrane</location>
        <topology evidence="3">Single-pass type I membrane protein</topology>
    </subcellularLocation>
</comment>
<comment type="similarity">
    <text evidence="3">Belongs to the EMP24/GP25L family.</text>
</comment>
<evidence type="ECO:0000250" key="1"/>
<evidence type="ECO:0000250" key="2">
    <source>
        <dbReference type="UniProtKB" id="Q8SXY6"/>
    </source>
</evidence>
<evidence type="ECO:0000255" key="3"/>
<evidence type="ECO:0000255" key="4">
    <source>
        <dbReference type="PROSITE-ProRule" id="PRU00096"/>
    </source>
</evidence>
<evidence type="ECO:0000312" key="5">
    <source>
        <dbReference type="EMBL" id="EDX13583.1"/>
    </source>
</evidence>
<feature type="signal peptide" evidence="3">
    <location>
        <begin position="1"/>
        <end position="20"/>
    </location>
</feature>
<feature type="chain" id="PRO_0000393932" description="Transmembrane emp24 domain-containing protein eca" evidence="3">
    <location>
        <begin position="21"/>
        <end position="216"/>
    </location>
</feature>
<feature type="topological domain" description="Lumenal" evidence="3">
    <location>
        <begin position="21"/>
        <end position="182"/>
    </location>
</feature>
<feature type="transmembrane region" description="Helical" evidence="3">
    <location>
        <begin position="183"/>
        <end position="203"/>
    </location>
</feature>
<feature type="topological domain" description="Cytoplasmic" evidence="3">
    <location>
        <begin position="204"/>
        <end position="216"/>
    </location>
</feature>
<feature type="domain" description="GOLD" evidence="4">
    <location>
        <begin position="30"/>
        <end position="126"/>
    </location>
</feature>
<feature type="coiled-coil region" evidence="3">
    <location>
        <begin position="134"/>
        <end position="164"/>
    </location>
</feature>
<feature type="short sequence motif" description="Prevents secretion from ER" evidence="3">
    <location>
        <begin position="213"/>
        <end position="216"/>
    </location>
</feature>
<keyword id="KW-0175">Coiled coil</keyword>
<keyword id="KW-0217">Developmental protein</keyword>
<keyword id="KW-0256">Endoplasmic reticulum</keyword>
<keyword id="KW-0472">Membrane</keyword>
<keyword id="KW-1185">Reference proteome</keyword>
<keyword id="KW-0732">Signal</keyword>
<keyword id="KW-0812">Transmembrane</keyword>
<keyword id="KW-1133">Transmembrane helix</keyword>